<organism>
    <name type="scientific">Bacillus amyloliquefaciens</name>
    <name type="common">Bacillus velezensis</name>
    <dbReference type="NCBI Taxonomy" id="1390"/>
    <lineage>
        <taxon>Bacteria</taxon>
        <taxon>Bacillati</taxon>
        <taxon>Bacillota</taxon>
        <taxon>Bacilli</taxon>
        <taxon>Bacillales</taxon>
        <taxon>Bacillaceae</taxon>
        <taxon>Bacillus</taxon>
        <taxon>Bacillus amyloliquefaciens group</taxon>
    </lineage>
</organism>
<evidence type="ECO:0000255" key="1">
    <source>
        <dbReference type="HAMAP-Rule" id="MF_00008"/>
    </source>
</evidence>
<evidence type="ECO:0000303" key="2">
    <source>
    </source>
</evidence>
<gene>
    <name evidence="1" type="primary">thyA1</name>
</gene>
<name>TYSY1_BACAM</name>
<reference key="1">
    <citation type="journal article" date="1998" name="Mol. Gen. Genet.">
        <title>Genes encoding thymidylate synthases A and B in the genus Bacillus are members of two distinct families.</title>
        <authorList>
            <person name="Tam N.H."/>
            <person name="Borriss R."/>
        </authorList>
    </citation>
    <scope>NUCLEOTIDE SEQUENCE [GENOMIC DNA]</scope>
    <source>
        <strain>S18 / H</strain>
    </source>
</reference>
<feature type="chain" id="PRO_0000140917" description="Thymidylate synthase 1">
    <location>
        <begin position="1" status="less than"/>
        <end position="230"/>
    </location>
</feature>
<feature type="active site" description="Nucleophile" evidence="1">
    <location>
        <position position="112"/>
    </location>
</feature>
<feature type="binding site" evidence="1">
    <location>
        <begin position="92"/>
        <end position="93"/>
    </location>
    <ligand>
        <name>dUMP</name>
        <dbReference type="ChEBI" id="CHEBI:246422"/>
        <note>ligand shared between dimeric partners</note>
    </ligand>
</feature>
<feature type="binding site" description="in other chain" evidence="1">
    <location>
        <begin position="132"/>
        <end position="135"/>
    </location>
    <ligand>
        <name>dUMP</name>
        <dbReference type="ChEBI" id="CHEBI:246422"/>
        <note>ligand shared between dimeric partners</note>
    </ligand>
</feature>
<feature type="binding site" evidence="1">
    <location>
        <position position="135"/>
    </location>
    <ligand>
        <name>(6R)-5,10-methylene-5,6,7,8-tetrahydrofolate</name>
        <dbReference type="ChEBI" id="CHEBI:15636"/>
    </ligand>
</feature>
<feature type="binding site" description="in other chain" evidence="1">
    <location>
        <position position="143"/>
    </location>
    <ligand>
        <name>dUMP</name>
        <dbReference type="ChEBI" id="CHEBI:246422"/>
        <note>ligand shared between dimeric partners</note>
    </ligand>
</feature>
<feature type="binding site" description="in other chain" evidence="1">
    <location>
        <begin position="173"/>
        <end position="175"/>
    </location>
    <ligand>
        <name>dUMP</name>
        <dbReference type="ChEBI" id="CHEBI:246422"/>
        <note>ligand shared between dimeric partners</note>
    </ligand>
</feature>
<feature type="non-terminal residue">
    <location>
        <position position="1"/>
    </location>
</feature>
<accession>O30397</accession>
<dbReference type="EC" id="2.1.1.45" evidence="1"/>
<dbReference type="EMBL" id="AF004104">
    <property type="protein sequence ID" value="AAC26326.1"/>
    <property type="molecule type" value="Genomic_DNA"/>
</dbReference>
<dbReference type="SMR" id="O30397"/>
<dbReference type="UniPathway" id="UPA00575"/>
<dbReference type="GO" id="GO:0005829">
    <property type="term" value="C:cytosol"/>
    <property type="evidence" value="ECO:0007669"/>
    <property type="project" value="TreeGrafter"/>
</dbReference>
<dbReference type="GO" id="GO:0004799">
    <property type="term" value="F:thymidylate synthase activity"/>
    <property type="evidence" value="ECO:0007669"/>
    <property type="project" value="UniProtKB-EC"/>
</dbReference>
<dbReference type="GO" id="GO:0006231">
    <property type="term" value="P:dTMP biosynthetic process"/>
    <property type="evidence" value="ECO:0007669"/>
    <property type="project" value="InterPro"/>
</dbReference>
<dbReference type="GO" id="GO:0006235">
    <property type="term" value="P:dTTP biosynthetic process"/>
    <property type="evidence" value="ECO:0007669"/>
    <property type="project" value="UniProtKB-UniPathway"/>
</dbReference>
<dbReference type="GO" id="GO:0032259">
    <property type="term" value="P:methylation"/>
    <property type="evidence" value="ECO:0007669"/>
    <property type="project" value="UniProtKB-KW"/>
</dbReference>
<dbReference type="CDD" id="cd00351">
    <property type="entry name" value="TS_Pyrimidine_HMase"/>
    <property type="match status" value="1"/>
</dbReference>
<dbReference type="FunFam" id="3.30.572.10:FF:000010">
    <property type="entry name" value="Thymidylate synthase 1"/>
    <property type="match status" value="1"/>
</dbReference>
<dbReference type="Gene3D" id="3.30.572.10">
    <property type="entry name" value="Thymidylate synthase/dCMP hydroxymethylase domain"/>
    <property type="match status" value="1"/>
</dbReference>
<dbReference type="HAMAP" id="MF_00008">
    <property type="entry name" value="Thymidy_synth_bact"/>
    <property type="match status" value="1"/>
</dbReference>
<dbReference type="InterPro" id="IPR045097">
    <property type="entry name" value="Thymidate_synth/dCMP_Mease"/>
</dbReference>
<dbReference type="InterPro" id="IPR023451">
    <property type="entry name" value="Thymidate_synth/dCMP_Mease_dom"/>
</dbReference>
<dbReference type="InterPro" id="IPR036926">
    <property type="entry name" value="Thymidate_synth/dCMP_Mease_sf"/>
</dbReference>
<dbReference type="InterPro" id="IPR000398">
    <property type="entry name" value="Thymidylate_synthase"/>
</dbReference>
<dbReference type="InterPro" id="IPR020940">
    <property type="entry name" value="Thymidylate_synthase_AS"/>
</dbReference>
<dbReference type="NCBIfam" id="TIGR03284">
    <property type="entry name" value="thym_sym"/>
    <property type="match status" value="1"/>
</dbReference>
<dbReference type="PANTHER" id="PTHR11548">
    <property type="entry name" value="THYMIDYLATE SYNTHASE 1"/>
    <property type="match status" value="1"/>
</dbReference>
<dbReference type="PANTHER" id="PTHR11548:SF1">
    <property type="entry name" value="THYMIDYLATE SYNTHASE 1"/>
    <property type="match status" value="1"/>
</dbReference>
<dbReference type="Pfam" id="PF00303">
    <property type="entry name" value="Thymidylat_synt"/>
    <property type="match status" value="1"/>
</dbReference>
<dbReference type="PRINTS" id="PR00108">
    <property type="entry name" value="THYMDSNTHASE"/>
</dbReference>
<dbReference type="SUPFAM" id="SSF55831">
    <property type="entry name" value="Thymidylate synthase/dCMP hydroxymethylase"/>
    <property type="match status" value="1"/>
</dbReference>
<dbReference type="PROSITE" id="PS00091">
    <property type="entry name" value="THYMIDYLATE_SYNTHASE"/>
    <property type="match status" value="1"/>
</dbReference>
<proteinExistence type="inferred from homology"/>
<keyword id="KW-0963">Cytoplasm</keyword>
<keyword id="KW-0489">Methyltransferase</keyword>
<keyword id="KW-0545">Nucleotide biosynthesis</keyword>
<keyword id="KW-0808">Transferase</keyword>
<protein>
    <recommendedName>
        <fullName evidence="1">Thymidylate synthase 1</fullName>
        <shortName evidence="1">TS 1</shortName>
        <shortName evidence="1">TSase 1</shortName>
        <ecNumber evidence="1">2.1.1.45</ecNumber>
    </recommendedName>
    <alternativeName>
        <fullName evidence="2">Thymidylate synthase A</fullName>
        <shortName evidence="2">TS A</shortName>
        <shortName evidence="2">TSase A</shortName>
    </alternativeName>
</protein>
<comment type="function">
    <text evidence="1">Catalyzes the reductive methylation of 2'-deoxyuridine-5'-monophosphate (dUMP) to 2'-deoxythymidine-5'-monophosphate (dTMP) while utilizing 5,10-methylenetetrahydrofolate (mTHF) as the methyl donor and reductant in the reaction, yielding dihydrofolate (DHF) as a by-product. This enzymatic reaction provides an intracellular de novo source of dTMP, an essential precursor for DNA biosynthesis.</text>
</comment>
<comment type="catalytic activity">
    <reaction evidence="1">
        <text>dUMP + (6R)-5,10-methylene-5,6,7,8-tetrahydrofolate = 7,8-dihydrofolate + dTMP</text>
        <dbReference type="Rhea" id="RHEA:12104"/>
        <dbReference type="ChEBI" id="CHEBI:15636"/>
        <dbReference type="ChEBI" id="CHEBI:57451"/>
        <dbReference type="ChEBI" id="CHEBI:63528"/>
        <dbReference type="ChEBI" id="CHEBI:246422"/>
        <dbReference type="EC" id="2.1.1.45"/>
    </reaction>
</comment>
<comment type="pathway">
    <text evidence="1">Pyrimidine metabolism; dTTP biosynthesis.</text>
</comment>
<comment type="subunit">
    <text evidence="1">Homodimer.</text>
</comment>
<comment type="subcellular location">
    <subcellularLocation>
        <location evidence="1">Cytoplasm</location>
    </subcellularLocation>
</comment>
<comment type="similarity">
    <text evidence="1">Belongs to the thymidylate synthase family. Bacterial-type ThyA subfamily.</text>
</comment>
<sequence length="230" mass="27218">FDNSEVPILTTKKLAWKTAIKELLWIWQLKSNDVNDLNKMSVHIWDQWKQEDGTIGHAYGFQLGKKNRSLNGEKVDQVDYLLHQLKNNPSSRRHITMLWNPDELDAMALTPCVYETQWYVKHGKLHLEVRARSNDMALGNPFNVFQYNVLQRMIAQVTGYELGEYIFNIGDCHVYTRHIDNLKIQMEREQFEAPELWINPEVKDFYDFTIDDFKLINYKHGDKLLFEVPV</sequence>